<accession>A1RHQ7</accession>
<reference key="1">
    <citation type="submission" date="2006-12" db="EMBL/GenBank/DDBJ databases">
        <title>Complete sequence of Shewanella sp. W3-18-1.</title>
        <authorList>
            <consortium name="US DOE Joint Genome Institute"/>
            <person name="Copeland A."/>
            <person name="Lucas S."/>
            <person name="Lapidus A."/>
            <person name="Barry K."/>
            <person name="Detter J.C."/>
            <person name="Glavina del Rio T."/>
            <person name="Hammon N."/>
            <person name="Israni S."/>
            <person name="Dalin E."/>
            <person name="Tice H."/>
            <person name="Pitluck S."/>
            <person name="Chain P."/>
            <person name="Malfatti S."/>
            <person name="Shin M."/>
            <person name="Vergez L."/>
            <person name="Schmutz J."/>
            <person name="Larimer F."/>
            <person name="Land M."/>
            <person name="Hauser L."/>
            <person name="Kyrpides N."/>
            <person name="Lykidis A."/>
            <person name="Tiedje J."/>
            <person name="Richardson P."/>
        </authorList>
    </citation>
    <scope>NUCLEOTIDE SEQUENCE [LARGE SCALE GENOMIC DNA]</scope>
    <source>
        <strain>W3-18-1</strain>
    </source>
</reference>
<sequence length="488" mass="54676">MIPVVALVGRPNVGKSTLFNRLTRTRDALVADFPGLTRDRKYGRAFLSGYEFIVVDTGGIDGTEEGIETKMAEQSLAAIEEADVVLFMTDARAGLTAADLSIAQHLRSREKTTFVVANKVDGIDADSACAEFWSLGLGEVYQMAASQGRGVTNMIEYALTPYAEAMGIERQGEEEVVDERQYTEEEAEAEQKRLQDLPIKLAIIGKPNVGKSTLTNRILGEERVVVYDEPGTTRDSIYIPMEREGREYVIIDTAGVRRRSKVHQVIEKFSVIKTLKAVEDANVVLLIIDAREGVAEQDLGLLGFALNAGRALVIAVNKWDGIDQGIKDRVKSELDRRLGFIDFARIHFISALHGTGVGHLFESIEEAYDSATRRVSTSMLTRIMQMSQDDHQPPLVNGRRVKLKYAHVGGYNPPIVVIHGNQVSRLPDSYKRYMMNYFRRSLKVVGTPIQLRFQEGDNPFENKTEKLTMSQERRRKRALSHIKDRKTK</sequence>
<feature type="chain" id="PRO_1000011741" description="GTPase Der">
    <location>
        <begin position="1"/>
        <end position="488"/>
    </location>
</feature>
<feature type="domain" description="EngA-type G 1">
    <location>
        <begin position="3"/>
        <end position="166"/>
    </location>
</feature>
<feature type="domain" description="EngA-type G 2">
    <location>
        <begin position="199"/>
        <end position="372"/>
    </location>
</feature>
<feature type="domain" description="KH-like" evidence="1">
    <location>
        <begin position="373"/>
        <end position="457"/>
    </location>
</feature>
<feature type="region of interest" description="Disordered" evidence="2">
    <location>
        <begin position="469"/>
        <end position="488"/>
    </location>
</feature>
<feature type="compositionally biased region" description="Basic residues" evidence="2">
    <location>
        <begin position="473"/>
        <end position="488"/>
    </location>
</feature>
<feature type="binding site" evidence="1">
    <location>
        <begin position="9"/>
        <end position="16"/>
    </location>
    <ligand>
        <name>GTP</name>
        <dbReference type="ChEBI" id="CHEBI:37565"/>
        <label>1</label>
    </ligand>
</feature>
<feature type="binding site" evidence="1">
    <location>
        <begin position="56"/>
        <end position="60"/>
    </location>
    <ligand>
        <name>GTP</name>
        <dbReference type="ChEBI" id="CHEBI:37565"/>
        <label>1</label>
    </ligand>
</feature>
<feature type="binding site" evidence="1">
    <location>
        <begin position="118"/>
        <end position="121"/>
    </location>
    <ligand>
        <name>GTP</name>
        <dbReference type="ChEBI" id="CHEBI:37565"/>
        <label>1</label>
    </ligand>
</feature>
<feature type="binding site" evidence="1">
    <location>
        <begin position="205"/>
        <end position="212"/>
    </location>
    <ligand>
        <name>GTP</name>
        <dbReference type="ChEBI" id="CHEBI:37565"/>
        <label>2</label>
    </ligand>
</feature>
<feature type="binding site" evidence="1">
    <location>
        <begin position="252"/>
        <end position="256"/>
    </location>
    <ligand>
        <name>GTP</name>
        <dbReference type="ChEBI" id="CHEBI:37565"/>
        <label>2</label>
    </ligand>
</feature>
<feature type="binding site" evidence="1">
    <location>
        <begin position="317"/>
        <end position="320"/>
    </location>
    <ligand>
        <name>GTP</name>
        <dbReference type="ChEBI" id="CHEBI:37565"/>
        <label>2</label>
    </ligand>
</feature>
<proteinExistence type="inferred from homology"/>
<protein>
    <recommendedName>
        <fullName evidence="1">GTPase Der</fullName>
    </recommendedName>
    <alternativeName>
        <fullName evidence="1">GTP-binding protein EngA</fullName>
    </alternativeName>
</protein>
<comment type="function">
    <text evidence="1">GTPase that plays an essential role in the late steps of ribosome biogenesis.</text>
</comment>
<comment type="subunit">
    <text evidence="1">Associates with the 50S ribosomal subunit.</text>
</comment>
<comment type="similarity">
    <text evidence="1">Belongs to the TRAFAC class TrmE-Era-EngA-EngB-Septin-like GTPase superfamily. EngA (Der) GTPase family.</text>
</comment>
<organism>
    <name type="scientific">Shewanella sp. (strain W3-18-1)</name>
    <dbReference type="NCBI Taxonomy" id="351745"/>
    <lineage>
        <taxon>Bacteria</taxon>
        <taxon>Pseudomonadati</taxon>
        <taxon>Pseudomonadota</taxon>
        <taxon>Gammaproteobacteria</taxon>
        <taxon>Alteromonadales</taxon>
        <taxon>Shewanellaceae</taxon>
        <taxon>Shewanella</taxon>
    </lineage>
</organism>
<evidence type="ECO:0000255" key="1">
    <source>
        <dbReference type="HAMAP-Rule" id="MF_00195"/>
    </source>
</evidence>
<evidence type="ECO:0000256" key="2">
    <source>
        <dbReference type="SAM" id="MobiDB-lite"/>
    </source>
</evidence>
<name>DER_SHESW</name>
<dbReference type="EMBL" id="CP000503">
    <property type="protein sequence ID" value="ABM24202.1"/>
    <property type="molecule type" value="Genomic_DNA"/>
</dbReference>
<dbReference type="RefSeq" id="WP_011788708.1">
    <property type="nucleotide sequence ID" value="NC_008750.1"/>
</dbReference>
<dbReference type="SMR" id="A1RHQ7"/>
<dbReference type="KEGG" id="shw:Sputw3181_1359"/>
<dbReference type="HOGENOM" id="CLU_016077_6_2_6"/>
<dbReference type="Proteomes" id="UP000002597">
    <property type="component" value="Chromosome"/>
</dbReference>
<dbReference type="GO" id="GO:0005525">
    <property type="term" value="F:GTP binding"/>
    <property type="evidence" value="ECO:0007669"/>
    <property type="project" value="UniProtKB-UniRule"/>
</dbReference>
<dbReference type="GO" id="GO:0043022">
    <property type="term" value="F:ribosome binding"/>
    <property type="evidence" value="ECO:0007669"/>
    <property type="project" value="TreeGrafter"/>
</dbReference>
<dbReference type="GO" id="GO:0042254">
    <property type="term" value="P:ribosome biogenesis"/>
    <property type="evidence" value="ECO:0007669"/>
    <property type="project" value="UniProtKB-KW"/>
</dbReference>
<dbReference type="CDD" id="cd01894">
    <property type="entry name" value="EngA1"/>
    <property type="match status" value="1"/>
</dbReference>
<dbReference type="CDD" id="cd01895">
    <property type="entry name" value="EngA2"/>
    <property type="match status" value="1"/>
</dbReference>
<dbReference type="FunFam" id="3.30.300.20:FF:000004">
    <property type="entry name" value="GTPase Der"/>
    <property type="match status" value="1"/>
</dbReference>
<dbReference type="FunFam" id="3.40.50.300:FF:000040">
    <property type="entry name" value="GTPase Der"/>
    <property type="match status" value="1"/>
</dbReference>
<dbReference type="FunFam" id="3.40.50.300:FF:000057">
    <property type="entry name" value="GTPase Der"/>
    <property type="match status" value="1"/>
</dbReference>
<dbReference type="Gene3D" id="3.30.300.20">
    <property type="match status" value="1"/>
</dbReference>
<dbReference type="Gene3D" id="3.40.50.300">
    <property type="entry name" value="P-loop containing nucleotide triphosphate hydrolases"/>
    <property type="match status" value="2"/>
</dbReference>
<dbReference type="HAMAP" id="MF_00195">
    <property type="entry name" value="GTPase_Der"/>
    <property type="match status" value="1"/>
</dbReference>
<dbReference type="InterPro" id="IPR031166">
    <property type="entry name" value="G_ENGA"/>
</dbReference>
<dbReference type="InterPro" id="IPR006073">
    <property type="entry name" value="GTP-bd"/>
</dbReference>
<dbReference type="InterPro" id="IPR016484">
    <property type="entry name" value="GTPase_Der"/>
</dbReference>
<dbReference type="InterPro" id="IPR032859">
    <property type="entry name" value="KH_dom-like"/>
</dbReference>
<dbReference type="InterPro" id="IPR015946">
    <property type="entry name" value="KH_dom-like_a/b"/>
</dbReference>
<dbReference type="InterPro" id="IPR027417">
    <property type="entry name" value="P-loop_NTPase"/>
</dbReference>
<dbReference type="InterPro" id="IPR005225">
    <property type="entry name" value="Small_GTP-bd"/>
</dbReference>
<dbReference type="NCBIfam" id="TIGR03594">
    <property type="entry name" value="GTPase_EngA"/>
    <property type="match status" value="1"/>
</dbReference>
<dbReference type="NCBIfam" id="TIGR00231">
    <property type="entry name" value="small_GTP"/>
    <property type="match status" value="2"/>
</dbReference>
<dbReference type="PANTHER" id="PTHR43834">
    <property type="entry name" value="GTPASE DER"/>
    <property type="match status" value="1"/>
</dbReference>
<dbReference type="PANTHER" id="PTHR43834:SF6">
    <property type="entry name" value="GTPASE DER"/>
    <property type="match status" value="1"/>
</dbReference>
<dbReference type="Pfam" id="PF14714">
    <property type="entry name" value="KH_dom-like"/>
    <property type="match status" value="1"/>
</dbReference>
<dbReference type="Pfam" id="PF01926">
    <property type="entry name" value="MMR_HSR1"/>
    <property type="match status" value="2"/>
</dbReference>
<dbReference type="PIRSF" id="PIRSF006485">
    <property type="entry name" value="GTP-binding_EngA"/>
    <property type="match status" value="1"/>
</dbReference>
<dbReference type="PRINTS" id="PR00326">
    <property type="entry name" value="GTP1OBG"/>
</dbReference>
<dbReference type="SUPFAM" id="SSF52540">
    <property type="entry name" value="P-loop containing nucleoside triphosphate hydrolases"/>
    <property type="match status" value="2"/>
</dbReference>
<dbReference type="PROSITE" id="PS51712">
    <property type="entry name" value="G_ENGA"/>
    <property type="match status" value="2"/>
</dbReference>
<keyword id="KW-0342">GTP-binding</keyword>
<keyword id="KW-0547">Nucleotide-binding</keyword>
<keyword id="KW-0677">Repeat</keyword>
<keyword id="KW-0690">Ribosome biogenesis</keyword>
<gene>
    <name evidence="1" type="primary">der</name>
    <name type="synonym">engA</name>
    <name type="ordered locus">Sputw3181_1359</name>
</gene>